<accession>Q73W15</accession>
<protein>
    <recommendedName>
        <fullName evidence="1">tRNA-2-methylthio-N(6)-dimethylallyladenosine synthase</fullName>
        <ecNumber evidence="1">2.8.4.3</ecNumber>
    </recommendedName>
    <alternativeName>
        <fullName evidence="1">(Dimethylallyl)adenosine tRNA methylthiotransferase MiaB</fullName>
    </alternativeName>
    <alternativeName>
        <fullName evidence="1">tRNA-i(6)A37 methylthiotransferase</fullName>
    </alternativeName>
</protein>
<proteinExistence type="inferred from homology"/>
<comment type="function">
    <text evidence="1">Catalyzes the methylthiolation of N6-(dimethylallyl)adenosine (i(6)A), leading to the formation of 2-methylthio-N6-(dimethylallyl)adenosine (ms(2)i(6)A) at position 37 in tRNAs that read codons beginning with uridine.</text>
</comment>
<comment type="catalytic activity">
    <reaction evidence="1">
        <text>N(6)-dimethylallyladenosine(37) in tRNA + (sulfur carrier)-SH + AH2 + 2 S-adenosyl-L-methionine = 2-methylsulfanyl-N(6)-dimethylallyladenosine(37) in tRNA + (sulfur carrier)-H + 5'-deoxyadenosine + L-methionine + A + S-adenosyl-L-homocysteine + 2 H(+)</text>
        <dbReference type="Rhea" id="RHEA:37067"/>
        <dbReference type="Rhea" id="RHEA-COMP:10375"/>
        <dbReference type="Rhea" id="RHEA-COMP:10376"/>
        <dbReference type="Rhea" id="RHEA-COMP:14737"/>
        <dbReference type="Rhea" id="RHEA-COMP:14739"/>
        <dbReference type="ChEBI" id="CHEBI:13193"/>
        <dbReference type="ChEBI" id="CHEBI:15378"/>
        <dbReference type="ChEBI" id="CHEBI:17319"/>
        <dbReference type="ChEBI" id="CHEBI:17499"/>
        <dbReference type="ChEBI" id="CHEBI:29917"/>
        <dbReference type="ChEBI" id="CHEBI:57844"/>
        <dbReference type="ChEBI" id="CHEBI:57856"/>
        <dbReference type="ChEBI" id="CHEBI:59789"/>
        <dbReference type="ChEBI" id="CHEBI:64428"/>
        <dbReference type="ChEBI" id="CHEBI:74415"/>
        <dbReference type="ChEBI" id="CHEBI:74417"/>
        <dbReference type="EC" id="2.8.4.3"/>
    </reaction>
</comment>
<comment type="cofactor">
    <cofactor evidence="1">
        <name>[4Fe-4S] cluster</name>
        <dbReference type="ChEBI" id="CHEBI:49883"/>
    </cofactor>
    <text evidence="1">Binds 2 [4Fe-4S] clusters. One cluster is coordinated with 3 cysteines and an exchangeable S-adenosyl-L-methionine.</text>
</comment>
<comment type="subunit">
    <text evidence="1">Monomer.</text>
</comment>
<comment type="subcellular location">
    <subcellularLocation>
        <location evidence="1">Cytoplasm</location>
    </subcellularLocation>
</comment>
<comment type="similarity">
    <text evidence="1">Belongs to the methylthiotransferase family. MiaB subfamily.</text>
</comment>
<gene>
    <name evidence="1" type="primary">miaB</name>
    <name type="ordered locus">MAP_2846c</name>
</gene>
<feature type="chain" id="PRO_0000374389" description="tRNA-2-methylthio-N(6)-dimethylallyladenosine synthase">
    <location>
        <begin position="1"/>
        <end position="517"/>
    </location>
</feature>
<feature type="domain" description="MTTase N-terminal" evidence="1">
    <location>
        <begin position="29"/>
        <end position="146"/>
    </location>
</feature>
<feature type="domain" description="Radical SAM core" evidence="2">
    <location>
        <begin position="169"/>
        <end position="405"/>
    </location>
</feature>
<feature type="domain" description="TRAM" evidence="1">
    <location>
        <begin position="408"/>
        <end position="475"/>
    </location>
</feature>
<feature type="binding site" evidence="1">
    <location>
        <position position="38"/>
    </location>
    <ligand>
        <name>[4Fe-4S] cluster</name>
        <dbReference type="ChEBI" id="CHEBI:49883"/>
        <label>1</label>
    </ligand>
</feature>
<feature type="binding site" evidence="1">
    <location>
        <position position="75"/>
    </location>
    <ligand>
        <name>[4Fe-4S] cluster</name>
        <dbReference type="ChEBI" id="CHEBI:49883"/>
        <label>1</label>
    </ligand>
</feature>
<feature type="binding site" evidence="1">
    <location>
        <position position="109"/>
    </location>
    <ligand>
        <name>[4Fe-4S] cluster</name>
        <dbReference type="ChEBI" id="CHEBI:49883"/>
        <label>1</label>
    </ligand>
</feature>
<feature type="binding site" evidence="1">
    <location>
        <position position="183"/>
    </location>
    <ligand>
        <name>[4Fe-4S] cluster</name>
        <dbReference type="ChEBI" id="CHEBI:49883"/>
        <label>2</label>
        <note>4Fe-4S-S-AdoMet</note>
    </ligand>
</feature>
<feature type="binding site" evidence="1">
    <location>
        <position position="187"/>
    </location>
    <ligand>
        <name>[4Fe-4S] cluster</name>
        <dbReference type="ChEBI" id="CHEBI:49883"/>
        <label>2</label>
        <note>4Fe-4S-S-AdoMet</note>
    </ligand>
</feature>
<feature type="binding site" evidence="1">
    <location>
        <position position="190"/>
    </location>
    <ligand>
        <name>[4Fe-4S] cluster</name>
        <dbReference type="ChEBI" id="CHEBI:49883"/>
        <label>2</label>
        <note>4Fe-4S-S-AdoMet</note>
    </ligand>
</feature>
<name>MIAB_MYCPA</name>
<dbReference type="EC" id="2.8.4.3" evidence="1"/>
<dbReference type="EMBL" id="AE016958">
    <property type="protein sequence ID" value="AAS05163.1"/>
    <property type="molecule type" value="Genomic_DNA"/>
</dbReference>
<dbReference type="SMR" id="Q73W15"/>
<dbReference type="STRING" id="262316.MAP_2846c"/>
<dbReference type="KEGG" id="mpa:MAP_2846c"/>
<dbReference type="PATRIC" id="fig|262316.17.peg.3015"/>
<dbReference type="eggNOG" id="COG0621">
    <property type="taxonomic scope" value="Bacteria"/>
</dbReference>
<dbReference type="HOGENOM" id="CLU_018697_2_2_11"/>
<dbReference type="Proteomes" id="UP000000580">
    <property type="component" value="Chromosome"/>
</dbReference>
<dbReference type="GO" id="GO:0005829">
    <property type="term" value="C:cytosol"/>
    <property type="evidence" value="ECO:0007669"/>
    <property type="project" value="TreeGrafter"/>
</dbReference>
<dbReference type="GO" id="GO:0051539">
    <property type="term" value="F:4 iron, 4 sulfur cluster binding"/>
    <property type="evidence" value="ECO:0007669"/>
    <property type="project" value="UniProtKB-UniRule"/>
</dbReference>
<dbReference type="GO" id="GO:0046872">
    <property type="term" value="F:metal ion binding"/>
    <property type="evidence" value="ECO:0007669"/>
    <property type="project" value="UniProtKB-KW"/>
</dbReference>
<dbReference type="GO" id="GO:0035597">
    <property type="term" value="F:N6-isopentenyladenosine methylthiotransferase activity"/>
    <property type="evidence" value="ECO:0007669"/>
    <property type="project" value="TreeGrafter"/>
</dbReference>
<dbReference type="CDD" id="cd01335">
    <property type="entry name" value="Radical_SAM"/>
    <property type="match status" value="1"/>
</dbReference>
<dbReference type="FunFam" id="3.40.50.12160:FF:000003">
    <property type="entry name" value="CDK5 regulatory subunit-associated protein 1"/>
    <property type="match status" value="1"/>
</dbReference>
<dbReference type="FunFam" id="3.80.30.20:FF:000001">
    <property type="entry name" value="tRNA-2-methylthio-N(6)-dimethylallyladenosine synthase 2"/>
    <property type="match status" value="1"/>
</dbReference>
<dbReference type="Gene3D" id="3.40.50.12160">
    <property type="entry name" value="Methylthiotransferase, N-terminal domain"/>
    <property type="match status" value="1"/>
</dbReference>
<dbReference type="Gene3D" id="3.80.30.20">
    <property type="entry name" value="tm_1862 like domain"/>
    <property type="match status" value="1"/>
</dbReference>
<dbReference type="HAMAP" id="MF_01864">
    <property type="entry name" value="tRNA_metthiotr_MiaB"/>
    <property type="match status" value="1"/>
</dbReference>
<dbReference type="InterPro" id="IPR006638">
    <property type="entry name" value="Elp3/MiaA/NifB-like_rSAM"/>
</dbReference>
<dbReference type="InterPro" id="IPR005839">
    <property type="entry name" value="Methylthiotransferase"/>
</dbReference>
<dbReference type="InterPro" id="IPR020612">
    <property type="entry name" value="Methylthiotransferase_CS"/>
</dbReference>
<dbReference type="InterPro" id="IPR013848">
    <property type="entry name" value="Methylthiotransferase_N"/>
</dbReference>
<dbReference type="InterPro" id="IPR038135">
    <property type="entry name" value="Methylthiotransferase_N_sf"/>
</dbReference>
<dbReference type="InterPro" id="IPR006463">
    <property type="entry name" value="MiaB_methiolase"/>
</dbReference>
<dbReference type="InterPro" id="IPR007197">
    <property type="entry name" value="rSAM"/>
</dbReference>
<dbReference type="InterPro" id="IPR023404">
    <property type="entry name" value="rSAM_horseshoe"/>
</dbReference>
<dbReference type="InterPro" id="IPR002792">
    <property type="entry name" value="TRAM_dom"/>
</dbReference>
<dbReference type="NCBIfam" id="TIGR01574">
    <property type="entry name" value="miaB-methiolase"/>
    <property type="match status" value="1"/>
</dbReference>
<dbReference type="NCBIfam" id="TIGR00089">
    <property type="entry name" value="MiaB/RimO family radical SAM methylthiotransferase"/>
    <property type="match status" value="1"/>
</dbReference>
<dbReference type="PANTHER" id="PTHR43020">
    <property type="entry name" value="CDK5 REGULATORY SUBUNIT-ASSOCIATED PROTEIN 1"/>
    <property type="match status" value="1"/>
</dbReference>
<dbReference type="PANTHER" id="PTHR43020:SF2">
    <property type="entry name" value="MITOCHONDRIAL TRNA METHYLTHIOTRANSFERASE CDK5RAP1"/>
    <property type="match status" value="1"/>
</dbReference>
<dbReference type="Pfam" id="PF04055">
    <property type="entry name" value="Radical_SAM"/>
    <property type="match status" value="1"/>
</dbReference>
<dbReference type="Pfam" id="PF00919">
    <property type="entry name" value="UPF0004"/>
    <property type="match status" value="1"/>
</dbReference>
<dbReference type="SFLD" id="SFLDF00273">
    <property type="entry name" value="(dimethylallyl)adenosine_tRNA"/>
    <property type="match status" value="1"/>
</dbReference>
<dbReference type="SFLD" id="SFLDG01082">
    <property type="entry name" value="B12-binding_domain_containing"/>
    <property type="match status" value="1"/>
</dbReference>
<dbReference type="SFLD" id="SFLDG01061">
    <property type="entry name" value="methylthiotransferase"/>
    <property type="match status" value="1"/>
</dbReference>
<dbReference type="SMART" id="SM00729">
    <property type="entry name" value="Elp3"/>
    <property type="match status" value="1"/>
</dbReference>
<dbReference type="SUPFAM" id="SSF102114">
    <property type="entry name" value="Radical SAM enzymes"/>
    <property type="match status" value="1"/>
</dbReference>
<dbReference type="PROSITE" id="PS51449">
    <property type="entry name" value="MTTASE_N"/>
    <property type="match status" value="1"/>
</dbReference>
<dbReference type="PROSITE" id="PS01278">
    <property type="entry name" value="MTTASE_RADICAL"/>
    <property type="match status" value="1"/>
</dbReference>
<dbReference type="PROSITE" id="PS51918">
    <property type="entry name" value="RADICAL_SAM"/>
    <property type="match status" value="1"/>
</dbReference>
<dbReference type="PROSITE" id="PS50926">
    <property type="entry name" value="TRAM"/>
    <property type="match status" value="1"/>
</dbReference>
<sequence>MTCGFSRADRSPYHGPVTSTVARDVSGVRTYQVRTYGCQMNVHDSERLAGLLEAAGYRRAAEGAEVADVVVFNTCAVRENADNKLYGNLSHLAPRKRGNPEMQIAVGGCLAQKDREAVLRRAPWVDVVFGTHNIGSLPTLLERARHNKAAQVEIAEALQQFPSSLPSARESAYAAWVSISVGCNNSCTFCIVPSLRGKEVDRSPDDILAEVRSLVADGVLEVTLLGQNVNAYGVSFADPALPRDRGAFARLLRACGEIDGLERVRFTSPHPAEFTDDVIEAMAQTPNVCPALHMPLQSGSDRVLRAMRRSYRAERFLGIIDRVRAAMPHAAITTDLIVGFPGETEEDFAATLDVVRRARFAAAFTFQYSKRPGTPAAELDGQIPKAVVQERYERLVELQESISLQGNQALVGQTVELLVATGEGRKDSATARMSGRARDGRLVHFAADDRVRPGDLVTTVITGAAPHHLIADAGVLSHRRTRAGDAHAAGRRPRGVGLGMPAVGPPAGPAQPVGCAS</sequence>
<reference key="1">
    <citation type="journal article" date="2005" name="Proc. Natl. Acad. Sci. U.S.A.">
        <title>The complete genome sequence of Mycobacterium avium subspecies paratuberculosis.</title>
        <authorList>
            <person name="Li L."/>
            <person name="Bannantine J.P."/>
            <person name="Zhang Q."/>
            <person name="Amonsin A."/>
            <person name="May B.J."/>
            <person name="Alt D."/>
            <person name="Banerji N."/>
            <person name="Kanjilal S."/>
            <person name="Kapur V."/>
        </authorList>
    </citation>
    <scope>NUCLEOTIDE SEQUENCE [LARGE SCALE GENOMIC DNA]</scope>
    <source>
        <strain>ATCC BAA-968 / K-10</strain>
    </source>
</reference>
<organism>
    <name type="scientific">Mycolicibacterium paratuberculosis (strain ATCC BAA-968 / K-10)</name>
    <name type="common">Mycobacterium paratuberculosis</name>
    <dbReference type="NCBI Taxonomy" id="262316"/>
    <lineage>
        <taxon>Bacteria</taxon>
        <taxon>Bacillati</taxon>
        <taxon>Actinomycetota</taxon>
        <taxon>Actinomycetes</taxon>
        <taxon>Mycobacteriales</taxon>
        <taxon>Mycobacteriaceae</taxon>
        <taxon>Mycobacterium</taxon>
        <taxon>Mycobacterium avium complex (MAC)</taxon>
    </lineage>
</organism>
<keyword id="KW-0004">4Fe-4S</keyword>
<keyword id="KW-0963">Cytoplasm</keyword>
<keyword id="KW-0408">Iron</keyword>
<keyword id="KW-0411">Iron-sulfur</keyword>
<keyword id="KW-0479">Metal-binding</keyword>
<keyword id="KW-1185">Reference proteome</keyword>
<keyword id="KW-0949">S-adenosyl-L-methionine</keyword>
<keyword id="KW-0808">Transferase</keyword>
<keyword id="KW-0819">tRNA processing</keyword>
<evidence type="ECO:0000255" key="1">
    <source>
        <dbReference type="HAMAP-Rule" id="MF_01864"/>
    </source>
</evidence>
<evidence type="ECO:0000255" key="2">
    <source>
        <dbReference type="PROSITE-ProRule" id="PRU01266"/>
    </source>
</evidence>